<protein>
    <recommendedName>
        <fullName>Factor arrest protein 3</fullName>
    </recommendedName>
</protein>
<keyword id="KW-0131">Cell cycle</keyword>
<keyword id="KW-0256">Endoplasmic reticulum</keyword>
<keyword id="KW-1185">Reference proteome</keyword>
<dbReference type="EMBL" id="U35609">
    <property type="protein sequence ID" value="AAB39035.1"/>
    <property type="molecule type" value="Genomic_DNA"/>
</dbReference>
<dbReference type="EMBL" id="Z49703">
    <property type="protein sequence ID" value="CAA89762.1"/>
    <property type="molecule type" value="Genomic_DNA"/>
</dbReference>
<dbReference type="EMBL" id="BK006946">
    <property type="protein sequence ID" value="DAA09951.1"/>
    <property type="molecule type" value="Genomic_DNA"/>
</dbReference>
<dbReference type="PIR" id="S54552">
    <property type="entry name" value="S54552"/>
</dbReference>
<dbReference type="RefSeq" id="NP_013767.1">
    <property type="nucleotide sequence ID" value="NM_001182550.1"/>
</dbReference>
<dbReference type="SMR" id="P46671"/>
<dbReference type="BioGRID" id="35228">
    <property type="interactions" value="264"/>
</dbReference>
<dbReference type="ComplexPortal" id="CPX-1197">
    <property type="entry name" value="FAR complex"/>
</dbReference>
<dbReference type="DIP" id="DIP-1314N"/>
<dbReference type="FunCoup" id="P46671">
    <property type="interactions" value="97"/>
</dbReference>
<dbReference type="IntAct" id="P46671">
    <property type="interactions" value="15"/>
</dbReference>
<dbReference type="MINT" id="P46671"/>
<dbReference type="STRING" id="4932.YMR052W"/>
<dbReference type="iPTMnet" id="P46671"/>
<dbReference type="PaxDb" id="4932-YMR052W"/>
<dbReference type="PeptideAtlas" id="P46671"/>
<dbReference type="EnsemblFungi" id="YMR052W_mRNA">
    <property type="protein sequence ID" value="YMR052W"/>
    <property type="gene ID" value="YMR052W"/>
</dbReference>
<dbReference type="GeneID" id="855073"/>
<dbReference type="KEGG" id="sce:YMR052W"/>
<dbReference type="AGR" id="SGD:S000004656"/>
<dbReference type="SGD" id="S000004656">
    <property type="gene designation" value="FAR3"/>
</dbReference>
<dbReference type="VEuPathDB" id="FungiDB:YMR052W"/>
<dbReference type="eggNOG" id="ENOG502S56F">
    <property type="taxonomic scope" value="Eukaryota"/>
</dbReference>
<dbReference type="HOGENOM" id="CLU_116422_0_0_1"/>
<dbReference type="InParanoid" id="P46671"/>
<dbReference type="OMA" id="ECRANRQ"/>
<dbReference type="OrthoDB" id="4031914at2759"/>
<dbReference type="BioCyc" id="YEAST:G3O-32757-MONOMER"/>
<dbReference type="BioGRID-ORCS" id="855073">
    <property type="hits" value="1 hit in 10 CRISPR screens"/>
</dbReference>
<dbReference type="PRO" id="PR:P46671"/>
<dbReference type="Proteomes" id="UP000002311">
    <property type="component" value="Chromosome XIII"/>
</dbReference>
<dbReference type="RNAct" id="P46671">
    <property type="molecule type" value="protein"/>
</dbReference>
<dbReference type="GO" id="GO:0071944">
    <property type="term" value="C:cell periphery"/>
    <property type="evidence" value="ECO:0007005"/>
    <property type="project" value="SGD"/>
</dbReference>
<dbReference type="GO" id="GO:0005783">
    <property type="term" value="C:endoplasmic reticulum"/>
    <property type="evidence" value="ECO:0000314"/>
    <property type="project" value="SGD"/>
</dbReference>
<dbReference type="GO" id="GO:0005789">
    <property type="term" value="C:endoplasmic reticulum membrane"/>
    <property type="evidence" value="ECO:0000303"/>
    <property type="project" value="ComplexPortal"/>
</dbReference>
<dbReference type="GO" id="GO:0090443">
    <property type="term" value="C:FAR/SIN/STRIPAK complex"/>
    <property type="evidence" value="ECO:0000303"/>
    <property type="project" value="ComplexPortal"/>
</dbReference>
<dbReference type="GO" id="GO:0000137">
    <property type="term" value="C:Golgi cis cisterna"/>
    <property type="evidence" value="ECO:0000314"/>
    <property type="project" value="SGD"/>
</dbReference>
<dbReference type="GO" id="GO:0071444">
    <property type="term" value="P:cellular response to pheromone"/>
    <property type="evidence" value="ECO:0000303"/>
    <property type="project" value="ComplexPortal"/>
</dbReference>
<dbReference type="GO" id="GO:0000321">
    <property type="term" value="P:re-entry into mitotic cell cycle after pheromone arrest"/>
    <property type="evidence" value="ECO:0000315"/>
    <property type="project" value="SGD"/>
</dbReference>
<dbReference type="GO" id="GO:0051726">
    <property type="term" value="P:regulation of cell cycle"/>
    <property type="evidence" value="ECO:0000303"/>
    <property type="project" value="ComplexPortal"/>
</dbReference>
<sequence length="204" mass="24032">MNSGGSDSFDYLLQLTKALSAECRANRQETDRIELLLKRLAKQSGISYDNLSKNIIPDSWKDNASQKASPPTEAQKLISENFKLIYEIEKQEYFNTKAVALINNINEHFSYIKNFIDEQNAIRERNIATFSSEKLDERNKSLQQNYESLKTENEETKKKLHSIIKQFEKLLKEVDWDRISKDSRDYSRFKKQLEYLQDTYQVLK</sequence>
<name>FAR3_YEAST</name>
<organism>
    <name type="scientific">Saccharomyces cerevisiae (strain ATCC 204508 / S288c)</name>
    <name type="common">Baker's yeast</name>
    <dbReference type="NCBI Taxonomy" id="559292"/>
    <lineage>
        <taxon>Eukaryota</taxon>
        <taxon>Fungi</taxon>
        <taxon>Dikarya</taxon>
        <taxon>Ascomycota</taxon>
        <taxon>Saccharomycotina</taxon>
        <taxon>Saccharomycetes</taxon>
        <taxon>Saccharomycetales</taxon>
        <taxon>Saccharomycetaceae</taxon>
        <taxon>Saccharomyces</taxon>
    </lineage>
</organism>
<proteinExistence type="evidence at protein level"/>
<reference key="1">
    <citation type="journal article" date="1995" name="Yeast">
        <title>Localization of the FAR3 gene: genetic mapping and molecular cloning using a chromosome walk-'n'-roll strategy.</title>
        <authorList>
            <person name="Horecka J."/>
        </authorList>
    </citation>
    <scope>NUCLEOTIDE SEQUENCE [GENOMIC DNA]</scope>
    <source>
        <strain>SC252</strain>
    </source>
</reference>
<reference key="2">
    <citation type="journal article" date="1997" name="Nature">
        <title>The nucleotide sequence of Saccharomyces cerevisiae chromosome XIII.</title>
        <authorList>
            <person name="Bowman S."/>
            <person name="Churcher C.M."/>
            <person name="Badcock K."/>
            <person name="Brown D."/>
            <person name="Chillingworth T."/>
            <person name="Connor R."/>
            <person name="Dedman K."/>
            <person name="Devlin K."/>
            <person name="Gentles S."/>
            <person name="Hamlin N."/>
            <person name="Hunt S."/>
            <person name="Jagels K."/>
            <person name="Lye G."/>
            <person name="Moule S."/>
            <person name="Odell C."/>
            <person name="Pearson D."/>
            <person name="Rajandream M.A."/>
            <person name="Rice P."/>
            <person name="Skelton J."/>
            <person name="Walsh S.V."/>
            <person name="Whitehead S."/>
            <person name="Barrell B.G."/>
        </authorList>
    </citation>
    <scope>NUCLEOTIDE SEQUENCE [LARGE SCALE GENOMIC DNA]</scope>
    <source>
        <strain>ATCC 204508 / S288c</strain>
    </source>
</reference>
<reference key="3">
    <citation type="journal article" date="2014" name="G3 (Bethesda)">
        <title>The reference genome sequence of Saccharomyces cerevisiae: Then and now.</title>
        <authorList>
            <person name="Engel S.R."/>
            <person name="Dietrich F.S."/>
            <person name="Fisk D.G."/>
            <person name="Binkley G."/>
            <person name="Balakrishnan R."/>
            <person name="Costanzo M.C."/>
            <person name="Dwight S.S."/>
            <person name="Hitz B.C."/>
            <person name="Karra K."/>
            <person name="Nash R.S."/>
            <person name="Weng S."/>
            <person name="Wong E.D."/>
            <person name="Lloyd P."/>
            <person name="Skrzypek M.S."/>
            <person name="Miyasato S.R."/>
            <person name="Simison M."/>
            <person name="Cherry J.M."/>
        </authorList>
    </citation>
    <scope>GENOME REANNOTATION</scope>
    <source>
        <strain>ATCC 204508 / S288c</strain>
    </source>
</reference>
<reference key="4">
    <citation type="journal article" date="2003" name="Mol. Cell. Biol.">
        <title>Far3 and five interacting proteins prevent premature recovery from pheromone arrest in the budding yeast Saccharomyces cerevisiae.</title>
        <authorList>
            <person name="Kemp H.A."/>
            <person name="Sprague G.F. Jr."/>
        </authorList>
    </citation>
    <scope>FUNCTION</scope>
    <scope>INTERACTION WITH FAR7; FAR8; FAR10; FAR11 AND VPS64</scope>
</reference>
<reference key="5">
    <citation type="journal article" date="2003" name="Nature">
        <title>Global analysis of protein localization in budding yeast.</title>
        <authorList>
            <person name="Huh W.-K."/>
            <person name="Falvo J.V."/>
            <person name="Gerke L.C."/>
            <person name="Carroll A.S."/>
            <person name="Howson R.W."/>
            <person name="Weissman J.S."/>
            <person name="O'Shea E.K."/>
        </authorList>
    </citation>
    <scope>SUBCELLULAR LOCATION [LARGE SCALE ANALYSIS]</scope>
</reference>
<reference key="6">
    <citation type="journal article" date="2003" name="Nature">
        <title>Global analysis of protein expression in yeast.</title>
        <authorList>
            <person name="Ghaemmaghami S."/>
            <person name="Huh W.-K."/>
            <person name="Bower K."/>
            <person name="Howson R.W."/>
            <person name="Belle A."/>
            <person name="Dephoure N."/>
            <person name="O'Shea E.K."/>
            <person name="Weissman J.S."/>
        </authorList>
    </citation>
    <scope>LEVEL OF PROTEIN EXPRESSION [LARGE SCALE ANALYSIS]</scope>
</reference>
<evidence type="ECO:0000269" key="1">
    <source>
    </source>
</evidence>
<evidence type="ECO:0000269" key="2">
    <source>
    </source>
</evidence>
<evidence type="ECO:0000269" key="3">
    <source>
    </source>
</evidence>
<evidence type="ECO:0000305" key="4"/>
<accession>P46671</accession>
<accession>D6VZM7</accession>
<feature type="chain" id="PRO_0000087191" description="Factor arrest protein 3">
    <location>
        <begin position="1"/>
        <end position="204"/>
    </location>
</feature>
<feature type="sequence conflict" description="In Ref. 1; AAB39035." evidence="4" ref="1">
    <original>S</original>
    <variation>T</variation>
    <location>
        <position position="6"/>
    </location>
</feature>
<feature type="sequence conflict" description="In Ref. 1; AAB39035." evidence="4" ref="1">
    <original>S</original>
    <variation>T</variation>
    <location>
        <position position="131"/>
    </location>
</feature>
<gene>
    <name type="primary">FAR3</name>
    <name type="ordered locus">YMR052W</name>
    <name type="ORF">YM9796.05</name>
</gene>
<comment type="function">
    <text evidence="1">Participates in the control of the reentry into the cell cycle following pheromone treatment.</text>
</comment>
<comment type="subunit">
    <text>Component of a complex at least composed of FAR3, FAR7, FAR8, FAR10, FAR11 and VPS64.</text>
</comment>
<comment type="interaction">
    <interactant intactId="EBI-6789">
        <id>P46671</id>
    </interactant>
    <interactant intactId="EBI-37631">
        <id>Q06001</id>
        <label>FAR10</label>
    </interactant>
    <organismsDiffer>false</organismsDiffer>
    <experiments>2</experiments>
</comment>
<comment type="interaction">
    <interactant intactId="EBI-6789">
        <id>P46671</id>
    </interactant>
    <interactant intactId="EBI-28900">
        <id>P53917</id>
        <label>FAR11</label>
    </interactant>
    <organismsDiffer>false</organismsDiffer>
    <experiments>3</experiments>
</comment>
<comment type="interaction">
    <interactant intactId="EBI-6789">
        <id>P46671</id>
    </interactant>
    <interactant intactId="EBI-22932">
        <id>P43592</id>
        <label>FAR7</label>
    </interactant>
    <organismsDiffer>false</organismsDiffer>
    <experiments>7</experiments>
</comment>
<comment type="interaction">
    <interactant intactId="EBI-6789">
        <id>P46671</id>
    </interactant>
    <interactant intactId="EBI-28053">
        <id>Q05040</id>
        <label>FAR8</label>
    </interactant>
    <organismsDiffer>false</organismsDiffer>
    <experiments>4</experiments>
</comment>
<comment type="interaction">
    <interactant intactId="EBI-6789">
        <id>P46671</id>
    </interactant>
    <interactant intactId="EBI-30418">
        <id>Q03944</id>
        <label>VPS64</label>
    </interactant>
    <organismsDiffer>false</organismsDiffer>
    <experiments>6</experiments>
</comment>
<comment type="subcellular location">
    <subcellularLocation>
        <location evidence="2">Endoplasmic reticulum</location>
    </subcellularLocation>
</comment>
<comment type="miscellaneous">
    <text evidence="3">Present with 1540 molecules/cell in log phase SD medium.</text>
</comment>